<keyword id="KW-0325">Glycoprotein</keyword>
<keyword id="KW-0406">Ion transport</keyword>
<keyword id="KW-0472">Membrane</keyword>
<keyword id="KW-1185">Reference proteome</keyword>
<keyword id="KW-0812">Transmembrane</keyword>
<keyword id="KW-1133">Transmembrane helix</keyword>
<keyword id="KW-0813">Transport</keyword>
<reference key="1">
    <citation type="submission" date="2004-07" db="EMBL/GenBank/DDBJ databases">
        <authorList>
            <consortium name="NIH - Xenopus Gene Collection (XGC) project"/>
        </authorList>
    </citation>
    <scope>NUCLEOTIDE SEQUENCE [LARGE SCALE MRNA]</scope>
    <source>
        <tissue>Embryo</tissue>
    </source>
</reference>
<proteinExistence type="evidence at transcript level"/>
<accession>Q6DFR1</accession>
<feature type="chain" id="PRO_0000338622" description="Solute carrier family 22 member 15">
    <location>
        <begin position="1"/>
        <end position="534"/>
    </location>
</feature>
<feature type="transmembrane region" description="Helical" evidence="2">
    <location>
        <begin position="22"/>
        <end position="42"/>
    </location>
</feature>
<feature type="transmembrane region" description="Helical" evidence="2">
    <location>
        <begin position="97"/>
        <end position="117"/>
    </location>
</feature>
<feature type="transmembrane region" description="Helical" evidence="2">
    <location>
        <begin position="136"/>
        <end position="156"/>
    </location>
</feature>
<feature type="transmembrane region" description="Helical" evidence="2">
    <location>
        <begin position="161"/>
        <end position="181"/>
    </location>
</feature>
<feature type="transmembrane region" description="Helical" evidence="2">
    <location>
        <begin position="191"/>
        <end position="211"/>
    </location>
</feature>
<feature type="transmembrane region" description="Helical" evidence="2">
    <location>
        <begin position="216"/>
        <end position="236"/>
    </location>
</feature>
<feature type="transmembrane region" description="Helical" evidence="2">
    <location>
        <begin position="297"/>
        <end position="317"/>
    </location>
</feature>
<feature type="transmembrane region" description="Helical" evidence="2">
    <location>
        <begin position="327"/>
        <end position="347"/>
    </location>
</feature>
<feature type="transmembrane region" description="Helical" evidence="2">
    <location>
        <begin position="356"/>
        <end position="376"/>
    </location>
</feature>
<feature type="transmembrane region" description="Helical" evidence="2">
    <location>
        <begin position="391"/>
        <end position="411"/>
    </location>
</feature>
<feature type="transmembrane region" description="Helical" evidence="2">
    <location>
        <begin position="424"/>
        <end position="444"/>
    </location>
</feature>
<feature type="transmembrane region" description="Helical" evidence="2">
    <location>
        <begin position="450"/>
        <end position="470"/>
    </location>
</feature>
<feature type="glycosylation site" description="N-linked (GlcNAc...) asparagine" evidence="2">
    <location>
        <position position="52"/>
    </location>
</feature>
<feature type="glycosylation site" description="N-linked (GlcNAc...) asparagine" evidence="2">
    <location>
        <position position="58"/>
    </location>
</feature>
<feature type="glycosylation site" description="N-linked (GlcNAc...) asparagine" evidence="2">
    <location>
        <position position="83"/>
    </location>
</feature>
<feature type="glycosylation site" description="N-linked (GlcNAc...) asparagine" evidence="2">
    <location>
        <position position="513"/>
    </location>
</feature>
<name>S22AF_XENTR</name>
<sequence length="534" mass="57603">MEVEGALKLVGEMGIYQIYLSFLLAVLLQLYSATEAIIITILGATPPYHWMNDSLTANGSRGKQYGSQLPAEGEHGHVVFDGNFTSIVSEWFLVGGAAYEVSVSSSVYFGGVLIGVISFGQLSDRFGRKPVYVTGLALEVVFAVMNALTPIFPLFLLTRFLVGVMNGGMSLVAFVLLNECIGASYWAAAGSLGSLCFAVGIAQFALIGYFIRSWRLLALLVNVQGAAVLALSLCIPESPRWLHAQGRLREAQESLLSLGRRNRRKVTSFTLCPRQKDSAHSANILTIYSNAILRQRTLIMMWVWFVCSLVYYGLTLSSGDLGGDIYLNLALSGLAELPAYPLCMYLINHKRVGRRGSLAGFLCVGGGACLLIMLVPGKTGSGPLSVLNSQTLSLLGKLNISAAFNIVYIYSSELYPTCVRNLGMGVCSMFSRIGGIIAPFIPALRFAHWALPFIVFGAAGVSAGLLSLLLPETLSAPLPETLADLRGAPYRRLEPDGEAMLHRPQAELGAFTNGSSEEDEEEELDAVRECQALI</sequence>
<gene>
    <name type="primary">slc22a15</name>
</gene>
<evidence type="ECO:0000250" key="1"/>
<evidence type="ECO:0000255" key="2"/>
<evidence type="ECO:0000305" key="3"/>
<dbReference type="EMBL" id="BC076672">
    <property type="protein sequence ID" value="AAH76672.1"/>
    <property type="status" value="ALT_INIT"/>
    <property type="molecule type" value="mRNA"/>
</dbReference>
<dbReference type="RefSeq" id="NP_001005012.1">
    <property type="nucleotide sequence ID" value="NM_001005012.1"/>
</dbReference>
<dbReference type="SMR" id="Q6DFR1"/>
<dbReference type="FunCoup" id="Q6DFR1">
    <property type="interactions" value="27"/>
</dbReference>
<dbReference type="GlyCosmos" id="Q6DFR1">
    <property type="glycosylation" value="4 sites, No reported glycans"/>
</dbReference>
<dbReference type="DNASU" id="448510"/>
<dbReference type="GeneID" id="448510"/>
<dbReference type="KEGG" id="xtr:448510"/>
<dbReference type="AGR" id="Xenbase:XB-GENE-959503"/>
<dbReference type="CTD" id="55356"/>
<dbReference type="Xenbase" id="XB-GENE-959503">
    <property type="gene designation" value="slc22a15"/>
</dbReference>
<dbReference type="InParanoid" id="Q6DFR1"/>
<dbReference type="OrthoDB" id="5296287at2759"/>
<dbReference type="Reactome" id="R-XTR-549127">
    <property type="pathway name" value="Organic cation transport"/>
</dbReference>
<dbReference type="Proteomes" id="UP000008143">
    <property type="component" value="Chromosome 2"/>
</dbReference>
<dbReference type="GO" id="GO:0016020">
    <property type="term" value="C:membrane"/>
    <property type="evidence" value="ECO:0007669"/>
    <property type="project" value="UniProtKB-SubCell"/>
</dbReference>
<dbReference type="GO" id="GO:0022857">
    <property type="term" value="F:transmembrane transporter activity"/>
    <property type="evidence" value="ECO:0007669"/>
    <property type="project" value="InterPro"/>
</dbReference>
<dbReference type="GO" id="GO:0006811">
    <property type="term" value="P:monoatomic ion transport"/>
    <property type="evidence" value="ECO:0007669"/>
    <property type="project" value="UniProtKB-KW"/>
</dbReference>
<dbReference type="Gene3D" id="1.20.1250.20">
    <property type="entry name" value="MFS general substrate transporter like domains"/>
    <property type="match status" value="1"/>
</dbReference>
<dbReference type="InterPro" id="IPR020846">
    <property type="entry name" value="MFS_dom"/>
</dbReference>
<dbReference type="InterPro" id="IPR005828">
    <property type="entry name" value="MFS_sugar_transport-like"/>
</dbReference>
<dbReference type="InterPro" id="IPR036259">
    <property type="entry name" value="MFS_trans_sf"/>
</dbReference>
<dbReference type="PANTHER" id="PTHR24064">
    <property type="entry name" value="SOLUTE CARRIER FAMILY 22 MEMBER"/>
    <property type="match status" value="1"/>
</dbReference>
<dbReference type="Pfam" id="PF00083">
    <property type="entry name" value="Sugar_tr"/>
    <property type="match status" value="1"/>
</dbReference>
<dbReference type="SUPFAM" id="SSF103473">
    <property type="entry name" value="MFS general substrate transporter"/>
    <property type="match status" value="1"/>
</dbReference>
<dbReference type="PROSITE" id="PS50850">
    <property type="entry name" value="MFS"/>
    <property type="match status" value="1"/>
</dbReference>
<organism>
    <name type="scientific">Xenopus tropicalis</name>
    <name type="common">Western clawed frog</name>
    <name type="synonym">Silurana tropicalis</name>
    <dbReference type="NCBI Taxonomy" id="8364"/>
    <lineage>
        <taxon>Eukaryota</taxon>
        <taxon>Metazoa</taxon>
        <taxon>Chordata</taxon>
        <taxon>Craniata</taxon>
        <taxon>Vertebrata</taxon>
        <taxon>Euteleostomi</taxon>
        <taxon>Amphibia</taxon>
        <taxon>Batrachia</taxon>
        <taxon>Anura</taxon>
        <taxon>Pipoidea</taxon>
        <taxon>Pipidae</taxon>
        <taxon>Xenopodinae</taxon>
        <taxon>Xenopus</taxon>
        <taxon>Silurana</taxon>
    </lineage>
</organism>
<comment type="function">
    <text evidence="1">Probably transports organic cations.</text>
</comment>
<comment type="subcellular location">
    <subcellularLocation>
        <location evidence="3">Membrane</location>
        <topology evidence="3">Multi-pass membrane protein</topology>
    </subcellularLocation>
</comment>
<comment type="similarity">
    <text evidence="3">Belongs to the major facilitator (TC 2.A.1) superfamily. Organic cation transporter (TC 2.A.1.19) family.</text>
</comment>
<comment type="sequence caution" evidence="3">
    <conflict type="erroneous initiation">
        <sequence resource="EMBL-CDS" id="AAH76672"/>
    </conflict>
</comment>
<protein>
    <recommendedName>
        <fullName>Solute carrier family 22 member 15</fullName>
    </recommendedName>
</protein>